<dbReference type="EMBL" id="CP000056">
    <property type="protein sequence ID" value="AAX72503.1"/>
    <property type="molecule type" value="Genomic_DNA"/>
</dbReference>
<dbReference type="RefSeq" id="WP_002983626.1">
    <property type="nucleotide sequence ID" value="NC_007296.2"/>
</dbReference>
<dbReference type="SMR" id="Q48S07"/>
<dbReference type="GeneID" id="69900485"/>
<dbReference type="KEGG" id="spb:M28_Spy1393"/>
<dbReference type="HOGENOM" id="CLU_140309_1_0_9"/>
<dbReference type="GO" id="GO:0005737">
    <property type="term" value="C:cytoplasm"/>
    <property type="evidence" value="ECO:0007669"/>
    <property type="project" value="UniProtKB-SubCell"/>
</dbReference>
<dbReference type="GO" id="GO:0051301">
    <property type="term" value="P:cell division"/>
    <property type="evidence" value="ECO:0007669"/>
    <property type="project" value="UniProtKB-UniRule"/>
</dbReference>
<dbReference type="GO" id="GO:0008360">
    <property type="term" value="P:regulation of cell shape"/>
    <property type="evidence" value="ECO:0007669"/>
    <property type="project" value="UniProtKB-UniRule"/>
</dbReference>
<dbReference type="Gene3D" id="6.10.250.660">
    <property type="match status" value="1"/>
</dbReference>
<dbReference type="HAMAP" id="MF_02011">
    <property type="entry name" value="GpsB"/>
    <property type="match status" value="1"/>
</dbReference>
<dbReference type="InterPro" id="IPR011229">
    <property type="entry name" value="Cell_cycle_GpsB"/>
</dbReference>
<dbReference type="InterPro" id="IPR019933">
    <property type="entry name" value="DivIVA_domain"/>
</dbReference>
<dbReference type="InterPro" id="IPR007793">
    <property type="entry name" value="DivIVA_fam"/>
</dbReference>
<dbReference type="NCBIfam" id="TIGR03544">
    <property type="entry name" value="DivI1A_domain"/>
    <property type="match status" value="1"/>
</dbReference>
<dbReference type="NCBIfam" id="NF010725">
    <property type="entry name" value="PRK14127.1"/>
    <property type="match status" value="1"/>
</dbReference>
<dbReference type="PANTHER" id="PTHR35794:SF1">
    <property type="entry name" value="CELL CYCLE PROTEIN GPSB"/>
    <property type="match status" value="1"/>
</dbReference>
<dbReference type="PANTHER" id="PTHR35794">
    <property type="entry name" value="CELL DIVISION PROTEIN DIVIVA"/>
    <property type="match status" value="1"/>
</dbReference>
<dbReference type="Pfam" id="PF05103">
    <property type="entry name" value="DivIVA"/>
    <property type="match status" value="1"/>
</dbReference>
<dbReference type="PIRSF" id="PIRSF029938">
    <property type="entry name" value="UCP029938"/>
    <property type="match status" value="1"/>
</dbReference>
<reference key="1">
    <citation type="journal article" date="2005" name="J. Infect. Dis.">
        <title>Genome sequence of a serotype M28 strain of group A Streptococcus: potential new insights into puerperal sepsis and bacterial disease specificity.</title>
        <authorList>
            <person name="Green N.M."/>
            <person name="Zhang S."/>
            <person name="Porcella S.F."/>
            <person name="Nagiec M.J."/>
            <person name="Barbian K.D."/>
            <person name="Beres S.B."/>
            <person name="Lefebvre R.B."/>
            <person name="Musser J.M."/>
        </authorList>
    </citation>
    <scope>NUCLEOTIDE SEQUENCE [LARGE SCALE GENOMIC DNA]</scope>
    <source>
        <strain>MGAS6180</strain>
    </source>
</reference>
<name>GPSB_STRPM</name>
<accession>Q48S07</accession>
<sequence length="108" mass="12445">MTSIIYSPKDIFEQEFKTSMRGFDKKEVDEFLDNVIKDYENFNAQIEALKAENEALKKAKFQARNTVSATVQQPVPQPTRVAQSATNFDILKRISKLEKEVFGKQIIE</sequence>
<gene>
    <name evidence="1" type="primary">gpsB</name>
    <name type="ordered locus">M28_Spy1393</name>
</gene>
<protein>
    <recommendedName>
        <fullName evidence="1">Cell cycle protein GpsB</fullName>
    </recommendedName>
    <alternativeName>
        <fullName evidence="1">Guiding PBP1-shuttling protein</fullName>
    </alternativeName>
</protein>
<organism>
    <name type="scientific">Streptococcus pyogenes serotype M28 (strain MGAS6180)</name>
    <dbReference type="NCBI Taxonomy" id="319701"/>
    <lineage>
        <taxon>Bacteria</taxon>
        <taxon>Bacillati</taxon>
        <taxon>Bacillota</taxon>
        <taxon>Bacilli</taxon>
        <taxon>Lactobacillales</taxon>
        <taxon>Streptococcaceae</taxon>
        <taxon>Streptococcus</taxon>
    </lineage>
</organism>
<proteinExistence type="inferred from homology"/>
<feature type="chain" id="PRO_0000337961" description="Cell cycle protein GpsB">
    <location>
        <begin position="1"/>
        <end position="108"/>
    </location>
</feature>
<feature type="coiled-coil region" evidence="1">
    <location>
        <begin position="32"/>
        <end position="69"/>
    </location>
</feature>
<comment type="function">
    <text evidence="1">Divisome component that associates with the complex late in its assembly, after the Z-ring is formed, and is dependent on DivIC and PBP2B for its recruitment to the divisome. Together with EzrA, is a key component of the system that regulates PBP1 localization during cell cycle progression. Its main role could be the removal of PBP1 from the cell pole after pole maturation is completed. Also contributes to the recruitment of PBP1 to the division complex. Not essential for septum formation.</text>
</comment>
<comment type="subunit">
    <text evidence="1">Forms polymers through the coiled coil domains. Interacts with PBP1, MreC and EzrA.</text>
</comment>
<comment type="subcellular location">
    <subcellularLocation>
        <location evidence="1">Cytoplasm</location>
    </subcellularLocation>
    <text evidence="1">Shuttles between the lateral wall and the division site in a cell cycle-dependent manner.</text>
</comment>
<comment type="similarity">
    <text evidence="1">Belongs to the GpsB family.</text>
</comment>
<keyword id="KW-0131">Cell cycle</keyword>
<keyword id="KW-0132">Cell division</keyword>
<keyword id="KW-0133">Cell shape</keyword>
<keyword id="KW-0175">Coiled coil</keyword>
<keyword id="KW-0963">Cytoplasm</keyword>
<evidence type="ECO:0000255" key="1">
    <source>
        <dbReference type="HAMAP-Rule" id="MF_02011"/>
    </source>
</evidence>